<proteinExistence type="evidence at protein level"/>
<sequence>MANEDCPKAADSPFSSDKHAQLILAQINKMRNGQHFCDVQLQVGQESFKAHRLVLAASSPYFAALFTGGMKESSKDVVPILGIEAGIFQILLDFIYTGIVNIGVNNVQELIIAADMLQLTEVVHLCCEFLKGQIDPLNCIGIFQFSEQIACHDLLEFSENYIHVHFLEVHSGEEFLALTKDQLIKILRSEELSIEDEYQVFLAAMQWILKDLGKRRKHVVEVLDPIRFPLLPPQRLLKYIEGVSDFNLRVALQTLLKEYCEVCKSPKENKFCSFLQTSKVRPRKKARKYLYAVGGYTRLQGGRWSDSRALSCVERFDTFSQYWTTVSSLHQARSGLGVTVLGGMVYAIGGEKDSMIFDCTECYDPVTKQWTTVASMNHPRCGLGVCVCYGAIYALGGWVGAEIGNTIERFDPDENKWEVVGNMAVSRYYFGCCEMQGLIYVIGGISNEGIELRSFEVYDPLSKRWSPLPPMGTRRAYLGVAALNDCIYSVGGWNETQDALHTVEKYSFEEEKWVEVASMKVPRAGMCVVAVNGLLYVSGGRSSSHDFLAPGTLDSVEVYNPHSDTWTEIGNMITSRCEGGVAVL</sequence>
<reference key="1">
    <citation type="journal article" date="1999" name="Gene">
        <title>Isolation and characterization of IPP, a novel human gene encoding an actin-binding, kelch-like protein.</title>
        <authorList>
            <person name="Kim I.F."/>
            <person name="Mohammadi E."/>
            <person name="Huang R.C."/>
        </authorList>
    </citation>
    <scope>NUCLEOTIDE SEQUENCE [MRNA] (ISOFORM 1)</scope>
    <source>
        <tissue>Placenta</tissue>
    </source>
</reference>
<reference key="2">
    <citation type="journal article" date="2004" name="Nat. Genet.">
        <title>Complete sequencing and characterization of 21,243 full-length human cDNAs.</title>
        <authorList>
            <person name="Ota T."/>
            <person name="Suzuki Y."/>
            <person name="Nishikawa T."/>
            <person name="Otsuki T."/>
            <person name="Sugiyama T."/>
            <person name="Irie R."/>
            <person name="Wakamatsu A."/>
            <person name="Hayashi K."/>
            <person name="Sato H."/>
            <person name="Nagai K."/>
            <person name="Kimura K."/>
            <person name="Makita H."/>
            <person name="Sekine M."/>
            <person name="Obayashi M."/>
            <person name="Nishi T."/>
            <person name="Shibahara T."/>
            <person name="Tanaka T."/>
            <person name="Ishii S."/>
            <person name="Yamamoto J."/>
            <person name="Saito K."/>
            <person name="Kawai Y."/>
            <person name="Isono Y."/>
            <person name="Nakamura Y."/>
            <person name="Nagahari K."/>
            <person name="Murakami K."/>
            <person name="Yasuda T."/>
            <person name="Iwayanagi T."/>
            <person name="Wagatsuma M."/>
            <person name="Shiratori A."/>
            <person name="Sudo H."/>
            <person name="Hosoiri T."/>
            <person name="Kaku Y."/>
            <person name="Kodaira H."/>
            <person name="Kondo H."/>
            <person name="Sugawara M."/>
            <person name="Takahashi M."/>
            <person name="Kanda K."/>
            <person name="Yokoi T."/>
            <person name="Furuya T."/>
            <person name="Kikkawa E."/>
            <person name="Omura Y."/>
            <person name="Abe K."/>
            <person name="Kamihara K."/>
            <person name="Katsuta N."/>
            <person name="Sato K."/>
            <person name="Tanikawa M."/>
            <person name="Yamazaki M."/>
            <person name="Ninomiya K."/>
            <person name="Ishibashi T."/>
            <person name="Yamashita H."/>
            <person name="Murakawa K."/>
            <person name="Fujimori K."/>
            <person name="Tanai H."/>
            <person name="Kimata M."/>
            <person name="Watanabe M."/>
            <person name="Hiraoka S."/>
            <person name="Chiba Y."/>
            <person name="Ishida S."/>
            <person name="Ono Y."/>
            <person name="Takiguchi S."/>
            <person name="Watanabe S."/>
            <person name="Yosida M."/>
            <person name="Hotuta T."/>
            <person name="Kusano J."/>
            <person name="Kanehori K."/>
            <person name="Takahashi-Fujii A."/>
            <person name="Hara H."/>
            <person name="Tanase T.-O."/>
            <person name="Nomura Y."/>
            <person name="Togiya S."/>
            <person name="Komai F."/>
            <person name="Hara R."/>
            <person name="Takeuchi K."/>
            <person name="Arita M."/>
            <person name="Imose N."/>
            <person name="Musashino K."/>
            <person name="Yuuki H."/>
            <person name="Oshima A."/>
            <person name="Sasaki N."/>
            <person name="Aotsuka S."/>
            <person name="Yoshikawa Y."/>
            <person name="Matsunawa H."/>
            <person name="Ichihara T."/>
            <person name="Shiohata N."/>
            <person name="Sano S."/>
            <person name="Moriya S."/>
            <person name="Momiyama H."/>
            <person name="Satoh N."/>
            <person name="Takami S."/>
            <person name="Terashima Y."/>
            <person name="Suzuki O."/>
            <person name="Nakagawa S."/>
            <person name="Senoh A."/>
            <person name="Mizoguchi H."/>
            <person name="Goto Y."/>
            <person name="Shimizu F."/>
            <person name="Wakebe H."/>
            <person name="Hishigaki H."/>
            <person name="Watanabe T."/>
            <person name="Sugiyama A."/>
            <person name="Takemoto M."/>
            <person name="Kawakami B."/>
            <person name="Yamazaki M."/>
            <person name="Watanabe K."/>
            <person name="Kumagai A."/>
            <person name="Itakura S."/>
            <person name="Fukuzumi Y."/>
            <person name="Fujimori Y."/>
            <person name="Komiyama M."/>
            <person name="Tashiro H."/>
            <person name="Tanigami A."/>
            <person name="Fujiwara T."/>
            <person name="Ono T."/>
            <person name="Yamada K."/>
            <person name="Fujii Y."/>
            <person name="Ozaki K."/>
            <person name="Hirao M."/>
            <person name="Ohmori Y."/>
            <person name="Kawabata A."/>
            <person name="Hikiji T."/>
            <person name="Kobatake N."/>
            <person name="Inagaki H."/>
            <person name="Ikema Y."/>
            <person name="Okamoto S."/>
            <person name="Okitani R."/>
            <person name="Kawakami T."/>
            <person name="Noguchi S."/>
            <person name="Itoh T."/>
            <person name="Shigeta K."/>
            <person name="Senba T."/>
            <person name="Matsumura K."/>
            <person name="Nakajima Y."/>
            <person name="Mizuno T."/>
            <person name="Morinaga M."/>
            <person name="Sasaki M."/>
            <person name="Togashi T."/>
            <person name="Oyama M."/>
            <person name="Hata H."/>
            <person name="Watanabe M."/>
            <person name="Komatsu T."/>
            <person name="Mizushima-Sugano J."/>
            <person name="Satoh T."/>
            <person name="Shirai Y."/>
            <person name="Takahashi Y."/>
            <person name="Nakagawa K."/>
            <person name="Okumura K."/>
            <person name="Nagase T."/>
            <person name="Nomura N."/>
            <person name="Kikuchi H."/>
            <person name="Masuho Y."/>
            <person name="Yamashita R."/>
            <person name="Nakai K."/>
            <person name="Yada T."/>
            <person name="Nakamura Y."/>
            <person name="Ohara O."/>
            <person name="Isogai T."/>
            <person name="Sugano S."/>
        </authorList>
    </citation>
    <scope>NUCLEOTIDE SEQUENCE [LARGE SCALE MRNA] (ISOFORM 1)</scope>
    <source>
        <tissue>Thyroid</tissue>
    </source>
</reference>
<reference key="3">
    <citation type="journal article" date="2006" name="Nature">
        <title>The DNA sequence and biological annotation of human chromosome 1.</title>
        <authorList>
            <person name="Gregory S.G."/>
            <person name="Barlow K.F."/>
            <person name="McLay K.E."/>
            <person name="Kaul R."/>
            <person name="Swarbreck D."/>
            <person name="Dunham A."/>
            <person name="Scott C.E."/>
            <person name="Howe K.L."/>
            <person name="Woodfine K."/>
            <person name="Spencer C.C.A."/>
            <person name="Jones M.C."/>
            <person name="Gillson C."/>
            <person name="Searle S."/>
            <person name="Zhou Y."/>
            <person name="Kokocinski F."/>
            <person name="McDonald L."/>
            <person name="Evans R."/>
            <person name="Phillips K."/>
            <person name="Atkinson A."/>
            <person name="Cooper R."/>
            <person name="Jones C."/>
            <person name="Hall R.E."/>
            <person name="Andrews T.D."/>
            <person name="Lloyd C."/>
            <person name="Ainscough R."/>
            <person name="Almeida J.P."/>
            <person name="Ambrose K.D."/>
            <person name="Anderson F."/>
            <person name="Andrew R.W."/>
            <person name="Ashwell R.I.S."/>
            <person name="Aubin K."/>
            <person name="Babbage A.K."/>
            <person name="Bagguley C.L."/>
            <person name="Bailey J."/>
            <person name="Beasley H."/>
            <person name="Bethel G."/>
            <person name="Bird C.P."/>
            <person name="Bray-Allen S."/>
            <person name="Brown J.Y."/>
            <person name="Brown A.J."/>
            <person name="Buckley D."/>
            <person name="Burton J."/>
            <person name="Bye J."/>
            <person name="Carder C."/>
            <person name="Chapman J.C."/>
            <person name="Clark S.Y."/>
            <person name="Clarke G."/>
            <person name="Clee C."/>
            <person name="Cobley V."/>
            <person name="Collier R.E."/>
            <person name="Corby N."/>
            <person name="Coville G.J."/>
            <person name="Davies J."/>
            <person name="Deadman R."/>
            <person name="Dunn M."/>
            <person name="Earthrowl M."/>
            <person name="Ellington A.G."/>
            <person name="Errington H."/>
            <person name="Frankish A."/>
            <person name="Frankland J."/>
            <person name="French L."/>
            <person name="Garner P."/>
            <person name="Garnett J."/>
            <person name="Gay L."/>
            <person name="Ghori M.R.J."/>
            <person name="Gibson R."/>
            <person name="Gilby L.M."/>
            <person name="Gillett W."/>
            <person name="Glithero R.J."/>
            <person name="Grafham D.V."/>
            <person name="Griffiths C."/>
            <person name="Griffiths-Jones S."/>
            <person name="Grocock R."/>
            <person name="Hammond S."/>
            <person name="Harrison E.S.I."/>
            <person name="Hart E."/>
            <person name="Haugen E."/>
            <person name="Heath P.D."/>
            <person name="Holmes S."/>
            <person name="Holt K."/>
            <person name="Howden P.J."/>
            <person name="Hunt A.R."/>
            <person name="Hunt S.E."/>
            <person name="Hunter G."/>
            <person name="Isherwood J."/>
            <person name="James R."/>
            <person name="Johnson C."/>
            <person name="Johnson D."/>
            <person name="Joy A."/>
            <person name="Kay M."/>
            <person name="Kershaw J.K."/>
            <person name="Kibukawa M."/>
            <person name="Kimberley A.M."/>
            <person name="King A."/>
            <person name="Knights A.J."/>
            <person name="Lad H."/>
            <person name="Laird G."/>
            <person name="Lawlor S."/>
            <person name="Leongamornlert D.A."/>
            <person name="Lloyd D.M."/>
            <person name="Loveland J."/>
            <person name="Lovell J."/>
            <person name="Lush M.J."/>
            <person name="Lyne R."/>
            <person name="Martin S."/>
            <person name="Mashreghi-Mohammadi M."/>
            <person name="Matthews L."/>
            <person name="Matthews N.S.W."/>
            <person name="McLaren S."/>
            <person name="Milne S."/>
            <person name="Mistry S."/>
            <person name="Moore M.J.F."/>
            <person name="Nickerson T."/>
            <person name="O'Dell C.N."/>
            <person name="Oliver K."/>
            <person name="Palmeiri A."/>
            <person name="Palmer S.A."/>
            <person name="Parker A."/>
            <person name="Patel D."/>
            <person name="Pearce A.V."/>
            <person name="Peck A.I."/>
            <person name="Pelan S."/>
            <person name="Phelps K."/>
            <person name="Phillimore B.J."/>
            <person name="Plumb R."/>
            <person name="Rajan J."/>
            <person name="Raymond C."/>
            <person name="Rouse G."/>
            <person name="Saenphimmachak C."/>
            <person name="Sehra H.K."/>
            <person name="Sheridan E."/>
            <person name="Shownkeen R."/>
            <person name="Sims S."/>
            <person name="Skuce C.D."/>
            <person name="Smith M."/>
            <person name="Steward C."/>
            <person name="Subramanian S."/>
            <person name="Sycamore N."/>
            <person name="Tracey A."/>
            <person name="Tromans A."/>
            <person name="Van Helmond Z."/>
            <person name="Wall M."/>
            <person name="Wallis J.M."/>
            <person name="White S."/>
            <person name="Whitehead S.L."/>
            <person name="Wilkinson J.E."/>
            <person name="Willey D.L."/>
            <person name="Williams H."/>
            <person name="Wilming L."/>
            <person name="Wray P.W."/>
            <person name="Wu Z."/>
            <person name="Coulson A."/>
            <person name="Vaudin M."/>
            <person name="Sulston J.E."/>
            <person name="Durbin R.M."/>
            <person name="Hubbard T."/>
            <person name="Wooster R."/>
            <person name="Dunham I."/>
            <person name="Carter N.P."/>
            <person name="McVean G."/>
            <person name="Ross M.T."/>
            <person name="Harrow J."/>
            <person name="Olson M.V."/>
            <person name="Beck S."/>
            <person name="Rogers J."/>
            <person name="Bentley D.R."/>
        </authorList>
    </citation>
    <scope>NUCLEOTIDE SEQUENCE [LARGE SCALE GENOMIC DNA]</scope>
</reference>
<reference key="4">
    <citation type="submission" date="2005-09" db="EMBL/GenBank/DDBJ databases">
        <authorList>
            <person name="Mural R.J."/>
            <person name="Istrail S."/>
            <person name="Sutton G.G."/>
            <person name="Florea L."/>
            <person name="Halpern A.L."/>
            <person name="Mobarry C.M."/>
            <person name="Lippert R."/>
            <person name="Walenz B."/>
            <person name="Shatkay H."/>
            <person name="Dew I."/>
            <person name="Miller J.R."/>
            <person name="Flanigan M.J."/>
            <person name="Edwards N.J."/>
            <person name="Bolanos R."/>
            <person name="Fasulo D."/>
            <person name="Halldorsson B.V."/>
            <person name="Hannenhalli S."/>
            <person name="Turner R."/>
            <person name="Yooseph S."/>
            <person name="Lu F."/>
            <person name="Nusskern D.R."/>
            <person name="Shue B.C."/>
            <person name="Zheng X.H."/>
            <person name="Zhong F."/>
            <person name="Delcher A.L."/>
            <person name="Huson D.H."/>
            <person name="Kravitz S.A."/>
            <person name="Mouchard L."/>
            <person name="Reinert K."/>
            <person name="Remington K.A."/>
            <person name="Clark A.G."/>
            <person name="Waterman M.S."/>
            <person name="Eichler E.E."/>
            <person name="Adams M.D."/>
            <person name="Hunkapiller M.W."/>
            <person name="Myers E.W."/>
            <person name="Venter J.C."/>
        </authorList>
    </citation>
    <scope>NUCLEOTIDE SEQUENCE [LARGE SCALE GENOMIC DNA]</scope>
    <scope>VARIANT ARG-264</scope>
</reference>
<reference key="5">
    <citation type="journal article" date="2004" name="Genome Res.">
        <title>The status, quality, and expansion of the NIH full-length cDNA project: the Mammalian Gene Collection (MGC).</title>
        <authorList>
            <consortium name="The MGC Project Team"/>
        </authorList>
    </citation>
    <scope>NUCLEOTIDE SEQUENCE [LARGE SCALE MRNA] (ISOFORM 2)</scope>
    <scope>VARIANT ARG-264</scope>
    <source>
        <tissue>Uterus</tissue>
    </source>
</reference>
<reference key="6">
    <citation type="journal article" date="1993" name="Genomics">
        <title>The IPP gene is assigned to human chromosome 1p32-1p22.</title>
        <authorList>
            <person name="Chang-Yeh A."/>
            <person name="Jabs E.W."/>
            <person name="Li X."/>
            <person name="Dracopoli N.C."/>
            <person name="Huang R.C."/>
        </authorList>
    </citation>
    <scope>CHROMOSOMAL LOCATION</scope>
</reference>
<comment type="function">
    <text>May play a role in organizing the actin cytoskeleton.</text>
</comment>
<comment type="interaction">
    <interactant intactId="EBI-10976190">
        <id>Q9Y573-2</id>
    </interactant>
    <interactant intactId="EBI-10961706">
        <id>Q96ED9-2</id>
        <label>HOOK2</label>
    </interactant>
    <organismsDiffer>false</organismsDiffer>
    <experiments>3</experiments>
</comment>
<comment type="subcellular location">
    <subcellularLocation>
        <location>Cytoplasm</location>
        <location>Cytoskeleton</location>
    </subcellularLocation>
</comment>
<comment type="alternative products">
    <event type="alternative splicing"/>
    <isoform>
        <id>Q9Y573-1</id>
        <name>1</name>
        <sequence type="displayed"/>
    </isoform>
    <isoform>
        <id>Q9Y573-2</id>
        <name>2</name>
        <sequence type="described" ref="VSP_040993"/>
    </isoform>
</comment>
<protein>
    <recommendedName>
        <fullName>Actin-binding protein IPP</fullName>
    </recommendedName>
    <alternativeName>
        <fullName>Intracisternal A particle-promoted polypeptide</fullName>
        <shortName>IPP</shortName>
    </alternativeName>
    <alternativeName>
        <fullName>Kelch-like protein 27</fullName>
    </alternativeName>
</protein>
<name>IPP_HUMAN</name>
<dbReference type="EMBL" id="AF156857">
    <property type="protein sequence ID" value="AAD39007.1"/>
    <property type="molecule type" value="mRNA"/>
</dbReference>
<dbReference type="EMBL" id="AK023880">
    <property type="protein sequence ID" value="BAG51233.1"/>
    <property type="molecule type" value="mRNA"/>
</dbReference>
<dbReference type="EMBL" id="AL604028">
    <property type="status" value="NOT_ANNOTATED_CDS"/>
    <property type="molecule type" value="Genomic_DNA"/>
</dbReference>
<dbReference type="EMBL" id="BX664740">
    <property type="status" value="NOT_ANNOTATED_CDS"/>
    <property type="molecule type" value="Genomic_DNA"/>
</dbReference>
<dbReference type="EMBL" id="CR589949">
    <property type="status" value="NOT_ANNOTATED_CDS"/>
    <property type="molecule type" value="Genomic_DNA"/>
</dbReference>
<dbReference type="EMBL" id="CH471059">
    <property type="protein sequence ID" value="EAX06950.1"/>
    <property type="molecule type" value="Genomic_DNA"/>
</dbReference>
<dbReference type="EMBL" id="CH471059">
    <property type="protein sequence ID" value="EAX06951.1"/>
    <property type="molecule type" value="Genomic_DNA"/>
</dbReference>
<dbReference type="EMBL" id="BC032544">
    <property type="protein sequence ID" value="AAH32544.1"/>
    <property type="molecule type" value="mRNA"/>
</dbReference>
<dbReference type="CCDS" id="CCDS30702.1">
    <molecule id="Q9Y573-1"/>
</dbReference>
<dbReference type="CCDS" id="CCDS44132.1">
    <molecule id="Q9Y573-2"/>
</dbReference>
<dbReference type="RefSeq" id="NP_001138821.1">
    <molecule id="Q9Y573-2"/>
    <property type="nucleotide sequence ID" value="NM_001145349.2"/>
</dbReference>
<dbReference type="RefSeq" id="NP_005888.1">
    <molecule id="Q9Y573-1"/>
    <property type="nucleotide sequence ID" value="NM_005897.3"/>
</dbReference>
<dbReference type="RefSeq" id="XP_024302531.1">
    <molecule id="Q9Y573-1"/>
    <property type="nucleotide sequence ID" value="XM_024446763.2"/>
</dbReference>
<dbReference type="RefSeq" id="XP_047275629.1">
    <molecule id="Q9Y573-2"/>
    <property type="nucleotide sequence ID" value="XM_047419673.1"/>
</dbReference>
<dbReference type="RefSeq" id="XP_054192395.1">
    <molecule id="Q9Y573-1"/>
    <property type="nucleotide sequence ID" value="XM_054336420.1"/>
</dbReference>
<dbReference type="RefSeq" id="XP_054192396.1">
    <molecule id="Q9Y573-2"/>
    <property type="nucleotide sequence ID" value="XM_054336421.1"/>
</dbReference>
<dbReference type="SMR" id="Q9Y573"/>
<dbReference type="BioGRID" id="109861">
    <property type="interactions" value="37"/>
</dbReference>
<dbReference type="ComplexPortal" id="CPX-8131">
    <property type="entry name" value="CRL3 E3 ubiquitin ligase complex, IPP variant"/>
</dbReference>
<dbReference type="FunCoup" id="Q9Y573">
    <property type="interactions" value="340"/>
</dbReference>
<dbReference type="IntAct" id="Q9Y573">
    <property type="interactions" value="31"/>
</dbReference>
<dbReference type="MINT" id="Q9Y573"/>
<dbReference type="STRING" id="9606.ENSP00000379739"/>
<dbReference type="iPTMnet" id="Q9Y573"/>
<dbReference type="PhosphoSitePlus" id="Q9Y573"/>
<dbReference type="BioMuta" id="IPP"/>
<dbReference type="DMDM" id="13431578"/>
<dbReference type="jPOST" id="Q9Y573"/>
<dbReference type="MassIVE" id="Q9Y573"/>
<dbReference type="PaxDb" id="9606-ENSP00000379739"/>
<dbReference type="PeptideAtlas" id="Q9Y573"/>
<dbReference type="ProteomicsDB" id="86302">
    <molecule id="Q9Y573-1"/>
</dbReference>
<dbReference type="ProteomicsDB" id="86303">
    <molecule id="Q9Y573-2"/>
</dbReference>
<dbReference type="Pumba" id="Q9Y573"/>
<dbReference type="Antibodypedia" id="32715">
    <property type="antibodies" value="64 antibodies from 17 providers"/>
</dbReference>
<dbReference type="DNASU" id="3652"/>
<dbReference type="Ensembl" id="ENST00000359942.8">
    <molecule id="Q9Y573-2"/>
    <property type="protein sequence ID" value="ENSP00000353024.4"/>
    <property type="gene ID" value="ENSG00000197429.11"/>
</dbReference>
<dbReference type="Ensembl" id="ENST00000396478.4">
    <molecule id="Q9Y573-1"/>
    <property type="protein sequence ID" value="ENSP00000379739.3"/>
    <property type="gene ID" value="ENSG00000197429.11"/>
</dbReference>
<dbReference type="GeneID" id="3652"/>
<dbReference type="KEGG" id="hsa:3652"/>
<dbReference type="MANE-Select" id="ENST00000396478.4">
    <property type="protein sequence ID" value="ENSP00000379739.3"/>
    <property type="RefSeq nucleotide sequence ID" value="NM_005897.3"/>
    <property type="RefSeq protein sequence ID" value="NP_005888.1"/>
</dbReference>
<dbReference type="UCSC" id="uc001cos.5">
    <molecule id="Q9Y573-1"/>
    <property type="organism name" value="human"/>
</dbReference>
<dbReference type="AGR" id="HGNC:6108"/>
<dbReference type="CTD" id="3652"/>
<dbReference type="DisGeNET" id="3652"/>
<dbReference type="GeneCards" id="IPP"/>
<dbReference type="HGNC" id="HGNC:6108">
    <property type="gene designation" value="IPP"/>
</dbReference>
<dbReference type="HPA" id="ENSG00000197429">
    <property type="expression patterns" value="Low tissue specificity"/>
</dbReference>
<dbReference type="MIM" id="147485">
    <property type="type" value="gene"/>
</dbReference>
<dbReference type="neXtProt" id="NX_Q9Y573"/>
<dbReference type="OpenTargets" id="ENSG00000197429"/>
<dbReference type="PharmGKB" id="PA29908"/>
<dbReference type="VEuPathDB" id="HostDB:ENSG00000197429"/>
<dbReference type="eggNOG" id="KOG4441">
    <property type="taxonomic scope" value="Eukaryota"/>
</dbReference>
<dbReference type="GeneTree" id="ENSGT00940000158629"/>
<dbReference type="HOGENOM" id="CLU_004253_14_1_1"/>
<dbReference type="InParanoid" id="Q9Y573"/>
<dbReference type="OMA" id="CYDPRDN"/>
<dbReference type="OrthoDB" id="1022638at2759"/>
<dbReference type="PAN-GO" id="Q9Y573">
    <property type="GO annotations" value="0 GO annotations based on evolutionary models"/>
</dbReference>
<dbReference type="PhylomeDB" id="Q9Y573"/>
<dbReference type="TreeFam" id="TF329218"/>
<dbReference type="PathwayCommons" id="Q9Y573"/>
<dbReference type="SignaLink" id="Q9Y573"/>
<dbReference type="BioGRID-ORCS" id="3652">
    <property type="hits" value="14 hits in 1192 CRISPR screens"/>
</dbReference>
<dbReference type="ChiTaRS" id="IPP">
    <property type="organism name" value="human"/>
</dbReference>
<dbReference type="GenomeRNAi" id="3652"/>
<dbReference type="Pharos" id="Q9Y573">
    <property type="development level" value="Tbio"/>
</dbReference>
<dbReference type="PRO" id="PR:Q9Y573"/>
<dbReference type="Proteomes" id="UP000005640">
    <property type="component" value="Chromosome 1"/>
</dbReference>
<dbReference type="RNAct" id="Q9Y573">
    <property type="molecule type" value="protein"/>
</dbReference>
<dbReference type="Bgee" id="ENSG00000197429">
    <property type="expression patterns" value="Expressed in skeletal muscle tissue of biceps brachii and 201 other cell types or tissues"/>
</dbReference>
<dbReference type="GO" id="GO:0015629">
    <property type="term" value="C:actin cytoskeleton"/>
    <property type="evidence" value="ECO:0000304"/>
    <property type="project" value="ProtInc"/>
</dbReference>
<dbReference type="GO" id="GO:0031463">
    <property type="term" value="C:Cul3-RING ubiquitin ligase complex"/>
    <property type="evidence" value="ECO:0000318"/>
    <property type="project" value="GO_Central"/>
</dbReference>
<dbReference type="GO" id="GO:0005737">
    <property type="term" value="C:cytoplasm"/>
    <property type="evidence" value="ECO:0000318"/>
    <property type="project" value="GO_Central"/>
</dbReference>
<dbReference type="GO" id="GO:0003779">
    <property type="term" value="F:actin binding"/>
    <property type="evidence" value="ECO:0000304"/>
    <property type="project" value="ProtInc"/>
</dbReference>
<dbReference type="GO" id="GO:1990756">
    <property type="term" value="F:ubiquitin-like ligase-substrate adaptor activity"/>
    <property type="evidence" value="ECO:0000318"/>
    <property type="project" value="GO_Central"/>
</dbReference>
<dbReference type="GO" id="GO:0043161">
    <property type="term" value="P:proteasome-mediated ubiquitin-dependent protein catabolic process"/>
    <property type="evidence" value="ECO:0000318"/>
    <property type="project" value="GO_Central"/>
</dbReference>
<dbReference type="CDD" id="cd18466">
    <property type="entry name" value="BACK_KLHL27_IPP"/>
    <property type="match status" value="1"/>
</dbReference>
<dbReference type="CDD" id="cd18256">
    <property type="entry name" value="BTB_POZ_KLHL27_IPP"/>
    <property type="match status" value="1"/>
</dbReference>
<dbReference type="FunFam" id="2.120.10.80:FF:000080">
    <property type="entry name" value="Actin-binding protein IPP"/>
    <property type="match status" value="1"/>
</dbReference>
<dbReference type="FunFam" id="3.30.710.10:FF:000123">
    <property type="entry name" value="Intracisternal A particle-promoted polypeptide"/>
    <property type="match status" value="1"/>
</dbReference>
<dbReference type="FunFam" id="1.25.40.420:FF:000001">
    <property type="entry name" value="Kelch-like family member 12"/>
    <property type="match status" value="1"/>
</dbReference>
<dbReference type="Gene3D" id="1.25.40.420">
    <property type="match status" value="1"/>
</dbReference>
<dbReference type="Gene3D" id="2.120.10.80">
    <property type="entry name" value="Kelch-type beta propeller"/>
    <property type="match status" value="2"/>
</dbReference>
<dbReference type="Gene3D" id="3.30.710.10">
    <property type="entry name" value="Potassium Channel Kv1.1, Chain A"/>
    <property type="match status" value="1"/>
</dbReference>
<dbReference type="InterPro" id="IPR011705">
    <property type="entry name" value="BACK"/>
</dbReference>
<dbReference type="InterPro" id="IPR017096">
    <property type="entry name" value="BTB-kelch_protein"/>
</dbReference>
<dbReference type="InterPro" id="IPR000210">
    <property type="entry name" value="BTB/POZ_dom"/>
</dbReference>
<dbReference type="InterPro" id="IPR030104">
    <property type="entry name" value="BTB_POZ_IPP"/>
</dbReference>
<dbReference type="InterPro" id="IPR011043">
    <property type="entry name" value="Gal_Oxase/kelch_b-propeller"/>
</dbReference>
<dbReference type="InterPro" id="IPR047067">
    <property type="entry name" value="IPP_BACK"/>
</dbReference>
<dbReference type="InterPro" id="IPR015915">
    <property type="entry name" value="Kelch-typ_b-propeller"/>
</dbReference>
<dbReference type="InterPro" id="IPR006652">
    <property type="entry name" value="Kelch_1"/>
</dbReference>
<dbReference type="InterPro" id="IPR011333">
    <property type="entry name" value="SKP1/BTB/POZ_sf"/>
</dbReference>
<dbReference type="PANTHER" id="PTHR24412">
    <property type="entry name" value="KELCH PROTEIN"/>
    <property type="match status" value="1"/>
</dbReference>
<dbReference type="PANTHER" id="PTHR24412:SF441">
    <property type="entry name" value="KELCH-LIKE PROTEIN 28"/>
    <property type="match status" value="1"/>
</dbReference>
<dbReference type="Pfam" id="PF07707">
    <property type="entry name" value="BACK"/>
    <property type="match status" value="1"/>
</dbReference>
<dbReference type="Pfam" id="PF00651">
    <property type="entry name" value="BTB"/>
    <property type="match status" value="1"/>
</dbReference>
<dbReference type="Pfam" id="PF01344">
    <property type="entry name" value="Kelch_1"/>
    <property type="match status" value="1"/>
</dbReference>
<dbReference type="Pfam" id="PF24681">
    <property type="entry name" value="Kelch_KLHDC2_KLHL20_DRC7"/>
    <property type="match status" value="1"/>
</dbReference>
<dbReference type="PIRSF" id="PIRSF037037">
    <property type="entry name" value="Kelch-like_protein_gigaxonin"/>
    <property type="match status" value="1"/>
</dbReference>
<dbReference type="SMART" id="SM00875">
    <property type="entry name" value="BACK"/>
    <property type="match status" value="1"/>
</dbReference>
<dbReference type="SMART" id="SM00225">
    <property type="entry name" value="BTB"/>
    <property type="match status" value="1"/>
</dbReference>
<dbReference type="SMART" id="SM00612">
    <property type="entry name" value="Kelch"/>
    <property type="match status" value="6"/>
</dbReference>
<dbReference type="SUPFAM" id="SSF50965">
    <property type="entry name" value="Galactose oxidase, central domain"/>
    <property type="match status" value="1"/>
</dbReference>
<dbReference type="SUPFAM" id="SSF54695">
    <property type="entry name" value="POZ domain"/>
    <property type="match status" value="1"/>
</dbReference>
<dbReference type="PROSITE" id="PS50097">
    <property type="entry name" value="BTB"/>
    <property type="match status" value="1"/>
</dbReference>
<evidence type="ECO:0000255" key="1">
    <source>
        <dbReference type="PROSITE-ProRule" id="PRU00037"/>
    </source>
</evidence>
<evidence type="ECO:0000269" key="2">
    <source>
    </source>
</evidence>
<evidence type="ECO:0000269" key="3">
    <source ref="4"/>
</evidence>
<evidence type="ECO:0000303" key="4">
    <source>
    </source>
</evidence>
<organism>
    <name type="scientific">Homo sapiens</name>
    <name type="common">Human</name>
    <dbReference type="NCBI Taxonomy" id="9606"/>
    <lineage>
        <taxon>Eukaryota</taxon>
        <taxon>Metazoa</taxon>
        <taxon>Chordata</taxon>
        <taxon>Craniata</taxon>
        <taxon>Vertebrata</taxon>
        <taxon>Euteleostomi</taxon>
        <taxon>Mammalia</taxon>
        <taxon>Eutheria</taxon>
        <taxon>Euarchontoglires</taxon>
        <taxon>Primates</taxon>
        <taxon>Haplorrhini</taxon>
        <taxon>Catarrhini</taxon>
        <taxon>Hominidae</taxon>
        <taxon>Homo</taxon>
    </lineage>
</organism>
<keyword id="KW-0009">Actin-binding</keyword>
<keyword id="KW-0025">Alternative splicing</keyword>
<keyword id="KW-0963">Cytoplasm</keyword>
<keyword id="KW-0206">Cytoskeleton</keyword>
<keyword id="KW-0880">Kelch repeat</keyword>
<keyword id="KW-1267">Proteomics identification</keyword>
<keyword id="KW-1185">Reference proteome</keyword>
<keyword id="KW-0677">Repeat</keyword>
<feature type="chain" id="PRO_0000119075" description="Actin-binding protein IPP">
    <location>
        <begin position="1"/>
        <end position="584"/>
    </location>
</feature>
<feature type="domain" description="BTB" evidence="1">
    <location>
        <begin position="37"/>
        <end position="104"/>
    </location>
</feature>
<feature type="repeat" description="Kelch 1">
    <location>
        <begin position="289"/>
        <end position="343"/>
    </location>
</feature>
<feature type="repeat" description="Kelch 2">
    <location>
        <begin position="344"/>
        <end position="390"/>
    </location>
</feature>
<feature type="repeat" description="Kelch 3">
    <location>
        <begin position="391"/>
        <end position="437"/>
    </location>
</feature>
<feature type="repeat" description="Kelch 4">
    <location>
        <begin position="439"/>
        <end position="485"/>
    </location>
</feature>
<feature type="repeat" description="Kelch 5">
    <location>
        <begin position="487"/>
        <end position="533"/>
    </location>
</feature>
<feature type="repeat" description="Kelch 6">
    <location>
        <begin position="535"/>
        <end position="583"/>
    </location>
</feature>
<feature type="splice variant" id="VSP_040993" description="In isoform 2." evidence="4">
    <original>GTLDSVEVYNPHSDTWTEIGNMITSRCEGGVAVL</original>
    <variation>DTHRYEVFRLKWENMCILFNDHKTLTKGIFNL</variation>
    <location>
        <begin position="551"/>
        <end position="584"/>
    </location>
</feature>
<feature type="sequence variant" id="VAR_050045" description="In dbSNP:rs28375469." evidence="2 3">
    <original>K</original>
    <variation>R</variation>
    <location>
        <position position="264"/>
    </location>
</feature>
<accession>Q9Y573</accession>
<accession>A2A6V4</accession>
<accession>D3DQ11</accession>
<accession>Q8N5C3</accession>
<gene>
    <name type="primary">IPP</name>
    <name type="synonym">KLHL27</name>
</gene>